<dbReference type="EC" id="6.1.1.7" evidence="1"/>
<dbReference type="EMBL" id="CP000868">
    <property type="protein sequence ID" value="ABX15593.1"/>
    <property type="molecule type" value="Genomic_DNA"/>
</dbReference>
<dbReference type="EMBL" id="AP009385">
    <property type="protein sequence ID" value="BAG43271.1"/>
    <property type="molecule type" value="Genomic_DNA"/>
</dbReference>
<dbReference type="RefSeq" id="WP_012213591.1">
    <property type="nucleotide sequence ID" value="NC_010084.1"/>
</dbReference>
<dbReference type="SMR" id="A9AC16"/>
<dbReference type="STRING" id="395019.BMULJ_01335"/>
<dbReference type="GeneID" id="89569851"/>
<dbReference type="KEGG" id="bmj:BMULJ_01335"/>
<dbReference type="KEGG" id="bmu:Bmul_1906"/>
<dbReference type="eggNOG" id="COG0013">
    <property type="taxonomic scope" value="Bacteria"/>
</dbReference>
<dbReference type="HOGENOM" id="CLU_004485_1_1_4"/>
<dbReference type="Proteomes" id="UP000008815">
    <property type="component" value="Chromosome 1"/>
</dbReference>
<dbReference type="GO" id="GO:0005829">
    <property type="term" value="C:cytosol"/>
    <property type="evidence" value="ECO:0007669"/>
    <property type="project" value="TreeGrafter"/>
</dbReference>
<dbReference type="GO" id="GO:0004813">
    <property type="term" value="F:alanine-tRNA ligase activity"/>
    <property type="evidence" value="ECO:0007669"/>
    <property type="project" value="UniProtKB-UniRule"/>
</dbReference>
<dbReference type="GO" id="GO:0002161">
    <property type="term" value="F:aminoacyl-tRNA deacylase activity"/>
    <property type="evidence" value="ECO:0007669"/>
    <property type="project" value="TreeGrafter"/>
</dbReference>
<dbReference type="GO" id="GO:0005524">
    <property type="term" value="F:ATP binding"/>
    <property type="evidence" value="ECO:0007669"/>
    <property type="project" value="UniProtKB-UniRule"/>
</dbReference>
<dbReference type="GO" id="GO:0000049">
    <property type="term" value="F:tRNA binding"/>
    <property type="evidence" value="ECO:0007669"/>
    <property type="project" value="UniProtKB-KW"/>
</dbReference>
<dbReference type="GO" id="GO:0008270">
    <property type="term" value="F:zinc ion binding"/>
    <property type="evidence" value="ECO:0007669"/>
    <property type="project" value="UniProtKB-UniRule"/>
</dbReference>
<dbReference type="GO" id="GO:0006419">
    <property type="term" value="P:alanyl-tRNA aminoacylation"/>
    <property type="evidence" value="ECO:0007669"/>
    <property type="project" value="UniProtKB-UniRule"/>
</dbReference>
<dbReference type="GO" id="GO:0045892">
    <property type="term" value="P:negative regulation of DNA-templated transcription"/>
    <property type="evidence" value="ECO:0007669"/>
    <property type="project" value="TreeGrafter"/>
</dbReference>
<dbReference type="CDD" id="cd00673">
    <property type="entry name" value="AlaRS_core"/>
    <property type="match status" value="1"/>
</dbReference>
<dbReference type="FunFam" id="2.40.30.130:FF:000001">
    <property type="entry name" value="Alanine--tRNA ligase"/>
    <property type="match status" value="1"/>
</dbReference>
<dbReference type="FunFam" id="3.10.310.40:FF:000001">
    <property type="entry name" value="Alanine--tRNA ligase"/>
    <property type="match status" value="1"/>
</dbReference>
<dbReference type="FunFam" id="3.30.54.20:FF:000001">
    <property type="entry name" value="Alanine--tRNA ligase"/>
    <property type="match status" value="1"/>
</dbReference>
<dbReference type="FunFam" id="3.30.930.10:FF:000004">
    <property type="entry name" value="Alanine--tRNA ligase"/>
    <property type="match status" value="1"/>
</dbReference>
<dbReference type="FunFam" id="3.30.980.10:FF:000004">
    <property type="entry name" value="Alanine--tRNA ligase, cytoplasmic"/>
    <property type="match status" value="1"/>
</dbReference>
<dbReference type="Gene3D" id="2.40.30.130">
    <property type="match status" value="1"/>
</dbReference>
<dbReference type="Gene3D" id="3.10.310.40">
    <property type="match status" value="1"/>
</dbReference>
<dbReference type="Gene3D" id="3.30.54.20">
    <property type="match status" value="1"/>
</dbReference>
<dbReference type="Gene3D" id="6.10.250.550">
    <property type="match status" value="1"/>
</dbReference>
<dbReference type="Gene3D" id="3.30.930.10">
    <property type="entry name" value="Bira Bifunctional Protein, Domain 2"/>
    <property type="match status" value="1"/>
</dbReference>
<dbReference type="Gene3D" id="3.30.980.10">
    <property type="entry name" value="Threonyl-trna Synthetase, Chain A, domain 2"/>
    <property type="match status" value="1"/>
</dbReference>
<dbReference type="HAMAP" id="MF_00036_B">
    <property type="entry name" value="Ala_tRNA_synth_B"/>
    <property type="match status" value="1"/>
</dbReference>
<dbReference type="InterPro" id="IPR045864">
    <property type="entry name" value="aa-tRNA-synth_II/BPL/LPL"/>
</dbReference>
<dbReference type="InterPro" id="IPR002318">
    <property type="entry name" value="Ala-tRNA-lgiase_IIc"/>
</dbReference>
<dbReference type="InterPro" id="IPR018162">
    <property type="entry name" value="Ala-tRNA-ligase_IIc_anticod-bd"/>
</dbReference>
<dbReference type="InterPro" id="IPR018165">
    <property type="entry name" value="Ala-tRNA-synth_IIc_core"/>
</dbReference>
<dbReference type="InterPro" id="IPR018164">
    <property type="entry name" value="Ala-tRNA-synth_IIc_N"/>
</dbReference>
<dbReference type="InterPro" id="IPR050058">
    <property type="entry name" value="Ala-tRNA_ligase"/>
</dbReference>
<dbReference type="InterPro" id="IPR023033">
    <property type="entry name" value="Ala_tRNA_ligase_euk/bac"/>
</dbReference>
<dbReference type="InterPro" id="IPR003156">
    <property type="entry name" value="DHHA1_dom"/>
</dbReference>
<dbReference type="InterPro" id="IPR018163">
    <property type="entry name" value="Thr/Ala-tRNA-synth_IIc_edit"/>
</dbReference>
<dbReference type="InterPro" id="IPR009000">
    <property type="entry name" value="Transl_B-barrel_sf"/>
</dbReference>
<dbReference type="InterPro" id="IPR012947">
    <property type="entry name" value="tRNA_SAD"/>
</dbReference>
<dbReference type="NCBIfam" id="TIGR00344">
    <property type="entry name" value="alaS"/>
    <property type="match status" value="1"/>
</dbReference>
<dbReference type="PANTHER" id="PTHR11777:SF9">
    <property type="entry name" value="ALANINE--TRNA LIGASE, CYTOPLASMIC"/>
    <property type="match status" value="1"/>
</dbReference>
<dbReference type="PANTHER" id="PTHR11777">
    <property type="entry name" value="ALANYL-TRNA SYNTHETASE"/>
    <property type="match status" value="1"/>
</dbReference>
<dbReference type="Pfam" id="PF02272">
    <property type="entry name" value="DHHA1"/>
    <property type="match status" value="1"/>
</dbReference>
<dbReference type="Pfam" id="PF01411">
    <property type="entry name" value="tRNA-synt_2c"/>
    <property type="match status" value="1"/>
</dbReference>
<dbReference type="Pfam" id="PF07973">
    <property type="entry name" value="tRNA_SAD"/>
    <property type="match status" value="1"/>
</dbReference>
<dbReference type="PRINTS" id="PR00980">
    <property type="entry name" value="TRNASYNTHALA"/>
</dbReference>
<dbReference type="SMART" id="SM00863">
    <property type="entry name" value="tRNA_SAD"/>
    <property type="match status" value="1"/>
</dbReference>
<dbReference type="SUPFAM" id="SSF55681">
    <property type="entry name" value="Class II aaRS and biotin synthetases"/>
    <property type="match status" value="1"/>
</dbReference>
<dbReference type="SUPFAM" id="SSF101353">
    <property type="entry name" value="Putative anticodon-binding domain of alanyl-tRNA synthetase (AlaRS)"/>
    <property type="match status" value="1"/>
</dbReference>
<dbReference type="SUPFAM" id="SSF55186">
    <property type="entry name" value="ThrRS/AlaRS common domain"/>
    <property type="match status" value="1"/>
</dbReference>
<dbReference type="SUPFAM" id="SSF50447">
    <property type="entry name" value="Translation proteins"/>
    <property type="match status" value="1"/>
</dbReference>
<dbReference type="PROSITE" id="PS50860">
    <property type="entry name" value="AA_TRNA_LIGASE_II_ALA"/>
    <property type="match status" value="1"/>
</dbReference>
<organism>
    <name type="scientific">Burkholderia multivorans (strain ATCC 17616 / 249)</name>
    <dbReference type="NCBI Taxonomy" id="395019"/>
    <lineage>
        <taxon>Bacteria</taxon>
        <taxon>Pseudomonadati</taxon>
        <taxon>Pseudomonadota</taxon>
        <taxon>Betaproteobacteria</taxon>
        <taxon>Burkholderiales</taxon>
        <taxon>Burkholderiaceae</taxon>
        <taxon>Burkholderia</taxon>
        <taxon>Burkholderia cepacia complex</taxon>
    </lineage>
</organism>
<accession>A9AC16</accession>
<evidence type="ECO:0000255" key="1">
    <source>
        <dbReference type="HAMAP-Rule" id="MF_00036"/>
    </source>
</evidence>
<proteinExistence type="inferred from homology"/>
<gene>
    <name evidence="1" type="primary">alaS</name>
    <name type="ordered locus">Bmul_1906</name>
    <name type="ordered locus">BMULJ_01335</name>
</gene>
<protein>
    <recommendedName>
        <fullName evidence="1">Alanine--tRNA ligase</fullName>
        <ecNumber evidence="1">6.1.1.7</ecNumber>
    </recommendedName>
    <alternativeName>
        <fullName evidence="1">Alanyl-tRNA synthetase</fullName>
        <shortName evidence="1">AlaRS</shortName>
    </alternativeName>
</protein>
<comment type="function">
    <text evidence="1">Catalyzes the attachment of alanine to tRNA(Ala) in a two-step reaction: alanine is first activated by ATP to form Ala-AMP and then transferred to the acceptor end of tRNA(Ala). Also edits incorrectly charged Ser-tRNA(Ala) and Gly-tRNA(Ala) via its editing domain.</text>
</comment>
<comment type="catalytic activity">
    <reaction evidence="1">
        <text>tRNA(Ala) + L-alanine + ATP = L-alanyl-tRNA(Ala) + AMP + diphosphate</text>
        <dbReference type="Rhea" id="RHEA:12540"/>
        <dbReference type="Rhea" id="RHEA-COMP:9657"/>
        <dbReference type="Rhea" id="RHEA-COMP:9923"/>
        <dbReference type="ChEBI" id="CHEBI:30616"/>
        <dbReference type="ChEBI" id="CHEBI:33019"/>
        <dbReference type="ChEBI" id="CHEBI:57972"/>
        <dbReference type="ChEBI" id="CHEBI:78442"/>
        <dbReference type="ChEBI" id="CHEBI:78497"/>
        <dbReference type="ChEBI" id="CHEBI:456215"/>
        <dbReference type="EC" id="6.1.1.7"/>
    </reaction>
</comment>
<comment type="cofactor">
    <cofactor evidence="1">
        <name>Zn(2+)</name>
        <dbReference type="ChEBI" id="CHEBI:29105"/>
    </cofactor>
    <text evidence="1">Binds 1 zinc ion per subunit.</text>
</comment>
<comment type="subcellular location">
    <subcellularLocation>
        <location evidence="1">Cytoplasm</location>
    </subcellularLocation>
</comment>
<comment type="domain">
    <text evidence="1">Consists of three domains; the N-terminal catalytic domain, the editing domain and the C-terminal C-Ala domain. The editing domain removes incorrectly charged amino acids, while the C-Ala domain, along with tRNA(Ala), serves as a bridge to cooperatively bring together the editing and aminoacylation centers thus stimulating deacylation of misacylated tRNAs.</text>
</comment>
<comment type="similarity">
    <text evidence="1">Belongs to the class-II aminoacyl-tRNA synthetase family.</text>
</comment>
<name>SYA_BURM1</name>
<reference key="1">
    <citation type="submission" date="2007-10" db="EMBL/GenBank/DDBJ databases">
        <title>Complete sequence of chromosome 1 of Burkholderia multivorans ATCC 17616.</title>
        <authorList>
            <person name="Copeland A."/>
            <person name="Lucas S."/>
            <person name="Lapidus A."/>
            <person name="Barry K."/>
            <person name="Glavina del Rio T."/>
            <person name="Dalin E."/>
            <person name="Tice H."/>
            <person name="Pitluck S."/>
            <person name="Chain P."/>
            <person name="Malfatti S."/>
            <person name="Shin M."/>
            <person name="Vergez L."/>
            <person name="Schmutz J."/>
            <person name="Larimer F."/>
            <person name="Land M."/>
            <person name="Hauser L."/>
            <person name="Kyrpides N."/>
            <person name="Kim E."/>
            <person name="Tiedje J."/>
            <person name="Richardson P."/>
        </authorList>
    </citation>
    <scope>NUCLEOTIDE SEQUENCE [LARGE SCALE GENOMIC DNA]</scope>
    <source>
        <strain>ATCC 17616 / 249</strain>
    </source>
</reference>
<reference key="2">
    <citation type="submission" date="2007-04" db="EMBL/GenBank/DDBJ databases">
        <title>Complete genome sequence of Burkholderia multivorans ATCC 17616.</title>
        <authorList>
            <person name="Ohtsubo Y."/>
            <person name="Yamashita A."/>
            <person name="Kurokawa K."/>
            <person name="Takami H."/>
            <person name="Yuhara S."/>
            <person name="Nishiyama E."/>
            <person name="Endo R."/>
            <person name="Miyazaki R."/>
            <person name="Ono A."/>
            <person name="Yano K."/>
            <person name="Ito M."/>
            <person name="Sota M."/>
            <person name="Yuji N."/>
            <person name="Hattori M."/>
            <person name="Tsuda M."/>
        </authorList>
    </citation>
    <scope>NUCLEOTIDE SEQUENCE [LARGE SCALE GENOMIC DNA]</scope>
    <source>
        <strain>ATCC 17616 / 249</strain>
    </source>
</reference>
<keyword id="KW-0030">Aminoacyl-tRNA synthetase</keyword>
<keyword id="KW-0067">ATP-binding</keyword>
<keyword id="KW-0963">Cytoplasm</keyword>
<keyword id="KW-0436">Ligase</keyword>
<keyword id="KW-0479">Metal-binding</keyword>
<keyword id="KW-0547">Nucleotide-binding</keyword>
<keyword id="KW-0648">Protein biosynthesis</keyword>
<keyword id="KW-1185">Reference proteome</keyword>
<keyword id="KW-0694">RNA-binding</keyword>
<keyword id="KW-0820">tRNA-binding</keyword>
<keyword id="KW-0862">Zinc</keyword>
<feature type="chain" id="PRO_0000347527" description="Alanine--tRNA ligase">
    <location>
        <begin position="1"/>
        <end position="874"/>
    </location>
</feature>
<feature type="binding site" evidence="1">
    <location>
        <position position="564"/>
    </location>
    <ligand>
        <name>Zn(2+)</name>
        <dbReference type="ChEBI" id="CHEBI:29105"/>
    </ligand>
</feature>
<feature type="binding site" evidence="1">
    <location>
        <position position="568"/>
    </location>
    <ligand>
        <name>Zn(2+)</name>
        <dbReference type="ChEBI" id="CHEBI:29105"/>
    </ligand>
</feature>
<feature type="binding site" evidence="1">
    <location>
        <position position="665"/>
    </location>
    <ligand>
        <name>Zn(2+)</name>
        <dbReference type="ChEBI" id="CHEBI:29105"/>
    </ligand>
</feature>
<feature type="binding site" evidence="1">
    <location>
        <position position="669"/>
    </location>
    <ligand>
        <name>Zn(2+)</name>
        <dbReference type="ChEBI" id="CHEBI:29105"/>
    </ligand>
</feature>
<sequence>MKAAEIREKFLKFFESKGHTIVRSSSLVPGNDPTLMFTNSGMVQFKDVFLGTDRRPYTRATTAQRSVRAGGKHNDLENVGYTARHHTFFEMLGNFSFGDYFKHDAIRFAWELLTTVYMLPKDKLWVTVYQEDDEAYDIWAKEVGVPTERIIRIGDNKGARYASDNFWTMGDTGPCGPCTEIFYDHGPEVWGGPPGSPEEDGDRYIEIWNLVFMQFNRDAQGNMTRLPKPCVDTGMGLERLAAVLQHVHSNYEIDLFQNLIKAAARVTEVSDLNNNSLKVIADHIRACAFLIVDGVIPGNEGRGYVLRRIVRRAIRHGYKLGRKGAFFHKLVADLVAEMGAAYPELKEAEQRVTDVLRQEEERFFETIEHGMSILESALADLEAKGGKVLDGELAFKLHDTYGFPLDLTADVCRERGVTVDEPAFDDAMARQREQARAAGKFKAAQGLEYTGAKTTFHGYEEIAFDDAKVVALYVDGSAVTEVKAGQDAVVVLDHTPFYAESGGQVGDQGVLANASTRFAVADTLKVQADVIGHHGTLEQGTLKVGDVLRAEIDAQRRARTQRNHSATHLMHKALREVLGSHVQQKGSLVDADKTRFDFAHNAPLTDDEIRRVEQIVNDEILANAPGIVRVMPYDEAVKGGAMALFGEKYGDEVRVLDLGFSRELCGGTHVSRTGDIGLFKIVMEGGVAAGIRRVEAITGDNAVRYVQELDARVNEAAAALKAQPAELTQRIAQVQDQVKSLEKELAALKSKLASSQGDELAQQAVEVGGVHVLAATLDGADAKTLRETVDKLKDKLKSAAIVLAAVEGGKVSLIAGVTAEASKKVKAGELVNFVAQQVGGKGGGRPDMAQAGGTEPANLPAALAGVKGWVEARL</sequence>